<sequence>MRYHGICWFIFQAAIIFAIFGSCQGAFRHQFKTAEQDGFARRNRDLAKFQKENLNWNGLFQLNSISYNSGVVSGVFEQQSENGENQHLFPFSISFLKNDVVRFQMDEKSRLEGTVEYEKNILTKRRFDASTELGFNERAEVYGKDAHLLEQTSTSLTIRYGSHGRFTVIVTFSPFKVEFQRDGEPQVVLNERHLLNMEYYRPKSSRTPEQEANGMWDETFDNFHDSKPKGPESVGLDIKFVDYGNVYGVPEHTSSLSLKETNNSDAGYTEPYRLYNVDLFEYEVDSPMSQYGAIPFMQAHKPNSDVAVFWSNAAATWIDVEKESGPSPHSQSTSTHWYSESGTLDLFIFLGPKASDVYESYSALVGRPLLPPLFSIGYHQCRWNYVSEEDVLNVDAKFDEVDMPYDTIWLDIEYASKRRYFTWDKATFPNPKAMLEKLDSKSRKLIVILDPHIKNDPNYFVSKELIDYNYAVKDKSGVDNYNADCWPGNSVWVDFFNPEAQAWWGSLYEFDRFESDKNLWIWNDMNEPSVFRGPETSMHRDAIHYGGWEHRDIHNIYGHKCINGTYNGLIKRGEGAVRPFILTRSFFAGTSALAANWIGDTMTTWEHLRGSIPTVLTNGISGMAFSGADVAGFFGNPDAELFVRWYETAIFYPFFRAHAHIDTKRREPWLYGEPYTSLVRELLRIRYRLLPTWYTAFYNSHTHGFPILYPQFLMHPEDEEGFAIDDQFYVGDSGLLVKPVTHPSIDKITIYLADDEVYFDLHDHTEYAGKGHQVVPAPLGRVPVLLRGGNILITRERIRRAAELTRNDPFTLTIAVSKIGKNASGFLYLDDGVTFNYKKGEYLIRHFSYENGILTMKDSHSNPPVSPKYSSSQKHLKVERINIYGEQTRKSIKIRKIIDSEVTEWDVSVDDSGCIRNPQLFLV</sequence>
<name>GLU2A_SCHPO</name>
<evidence type="ECO:0000250" key="1">
    <source>
        <dbReference type="UniProtKB" id="P38138"/>
    </source>
</evidence>
<evidence type="ECO:0000250" key="2">
    <source>
        <dbReference type="UniProtKB" id="Q9C0Y4"/>
    </source>
</evidence>
<evidence type="ECO:0000255" key="3"/>
<evidence type="ECO:0000269" key="4">
    <source>
    </source>
</evidence>
<evidence type="ECO:0000269" key="5">
    <source>
    </source>
</evidence>
<evidence type="ECO:0000269" key="6">
    <source>
    </source>
</evidence>
<evidence type="ECO:0000312" key="7">
    <source>
        <dbReference type="EMBL" id="CAB65603.1"/>
    </source>
</evidence>
<feature type="signal peptide" evidence="3">
    <location>
        <begin position="1"/>
        <end position="25"/>
    </location>
</feature>
<feature type="chain" id="PRO_0000372782" description="Glucosidase 2 subunit alpha">
    <location>
        <begin position="26"/>
        <end position="923"/>
    </location>
</feature>
<feature type="active site" description="Nucleophile" evidence="2">
    <location>
        <position position="524"/>
    </location>
</feature>
<feature type="active site" evidence="2">
    <location>
        <position position="527"/>
    </location>
</feature>
<feature type="active site" description="Proton donor" evidence="2">
    <location>
        <position position="600"/>
    </location>
</feature>
<feature type="glycosylation site" description="N-linked (GlcNAc...) asparagine" evidence="3">
    <location>
        <position position="262"/>
    </location>
</feature>
<feature type="glycosylation site" description="N-linked (GlcNAc...) asparagine" evidence="3">
    <location>
        <position position="563"/>
    </location>
</feature>
<feature type="glycosylation site" description="N-linked (GlcNAc...) asparagine" evidence="3">
    <location>
        <position position="822"/>
    </location>
</feature>
<organism>
    <name type="scientific">Schizosaccharomyces pombe (strain 972 / ATCC 24843)</name>
    <name type="common">Fission yeast</name>
    <dbReference type="NCBI Taxonomy" id="284812"/>
    <lineage>
        <taxon>Eukaryota</taxon>
        <taxon>Fungi</taxon>
        <taxon>Dikarya</taxon>
        <taxon>Ascomycota</taxon>
        <taxon>Taphrinomycotina</taxon>
        <taxon>Schizosaccharomycetes</taxon>
        <taxon>Schizosaccharomycetales</taxon>
        <taxon>Schizosaccharomycetaceae</taxon>
        <taxon>Schizosaccharomyces</taxon>
    </lineage>
</organism>
<gene>
    <name evidence="7" type="primary">gls2</name>
    <name type="ORF">SPAC1002.03c</name>
</gene>
<proteinExistence type="evidence at protein level"/>
<protein>
    <recommendedName>
        <fullName evidence="1">Glucosidase 2 subunit alpha</fullName>
        <ecNumber evidence="5 6">3.2.1.207</ecNumber>
    </recommendedName>
    <alternativeName>
        <fullName evidence="1">Alpha-glucosidase II subunit alpha</fullName>
    </alternativeName>
    <alternativeName>
        <fullName evidence="7">Glucosidase II gls2</fullName>
    </alternativeName>
    <alternativeName>
        <fullName evidence="1">Glucosidase II subunit alpha</fullName>
    </alternativeName>
</protein>
<keyword id="KW-0256">Endoplasmic reticulum</keyword>
<keyword id="KW-0325">Glycoprotein</keyword>
<keyword id="KW-0326">Glycosidase</keyword>
<keyword id="KW-0378">Hydrolase</keyword>
<keyword id="KW-1185">Reference proteome</keyword>
<keyword id="KW-0732">Signal</keyword>
<reference key="1">
    <citation type="journal article" date="2002" name="Nature">
        <title>The genome sequence of Schizosaccharomyces pombe.</title>
        <authorList>
            <person name="Wood V."/>
            <person name="Gwilliam R."/>
            <person name="Rajandream M.A."/>
            <person name="Lyne M.H."/>
            <person name="Lyne R."/>
            <person name="Stewart A."/>
            <person name="Sgouros J.G."/>
            <person name="Peat N."/>
            <person name="Hayles J."/>
            <person name="Baker S.G."/>
            <person name="Basham D."/>
            <person name="Bowman S."/>
            <person name="Brooks K."/>
            <person name="Brown D."/>
            <person name="Brown S."/>
            <person name="Chillingworth T."/>
            <person name="Churcher C.M."/>
            <person name="Collins M."/>
            <person name="Connor R."/>
            <person name="Cronin A."/>
            <person name="Davis P."/>
            <person name="Feltwell T."/>
            <person name="Fraser A."/>
            <person name="Gentles S."/>
            <person name="Goble A."/>
            <person name="Hamlin N."/>
            <person name="Harris D.E."/>
            <person name="Hidalgo J."/>
            <person name="Hodgson G."/>
            <person name="Holroyd S."/>
            <person name="Hornsby T."/>
            <person name="Howarth S."/>
            <person name="Huckle E.J."/>
            <person name="Hunt S."/>
            <person name="Jagels K."/>
            <person name="James K.D."/>
            <person name="Jones L."/>
            <person name="Jones M."/>
            <person name="Leather S."/>
            <person name="McDonald S."/>
            <person name="McLean J."/>
            <person name="Mooney P."/>
            <person name="Moule S."/>
            <person name="Mungall K.L."/>
            <person name="Murphy L.D."/>
            <person name="Niblett D."/>
            <person name="Odell C."/>
            <person name="Oliver K."/>
            <person name="O'Neil S."/>
            <person name="Pearson D."/>
            <person name="Quail M.A."/>
            <person name="Rabbinowitsch E."/>
            <person name="Rutherford K.M."/>
            <person name="Rutter S."/>
            <person name="Saunders D."/>
            <person name="Seeger K."/>
            <person name="Sharp S."/>
            <person name="Skelton J."/>
            <person name="Simmonds M.N."/>
            <person name="Squares R."/>
            <person name="Squares S."/>
            <person name="Stevens K."/>
            <person name="Taylor K."/>
            <person name="Taylor R.G."/>
            <person name="Tivey A."/>
            <person name="Walsh S.V."/>
            <person name="Warren T."/>
            <person name="Whitehead S."/>
            <person name="Woodward J.R."/>
            <person name="Volckaert G."/>
            <person name="Aert R."/>
            <person name="Robben J."/>
            <person name="Grymonprez B."/>
            <person name="Weltjens I."/>
            <person name="Vanstreels E."/>
            <person name="Rieger M."/>
            <person name="Schaefer M."/>
            <person name="Mueller-Auer S."/>
            <person name="Gabel C."/>
            <person name="Fuchs M."/>
            <person name="Duesterhoeft A."/>
            <person name="Fritzc C."/>
            <person name="Holzer E."/>
            <person name="Moestl D."/>
            <person name="Hilbert H."/>
            <person name="Borzym K."/>
            <person name="Langer I."/>
            <person name="Beck A."/>
            <person name="Lehrach H."/>
            <person name="Reinhardt R."/>
            <person name="Pohl T.M."/>
            <person name="Eger P."/>
            <person name="Zimmermann W."/>
            <person name="Wedler H."/>
            <person name="Wambutt R."/>
            <person name="Purnelle B."/>
            <person name="Goffeau A."/>
            <person name="Cadieu E."/>
            <person name="Dreano S."/>
            <person name="Gloux S."/>
            <person name="Lelaure V."/>
            <person name="Mottier S."/>
            <person name="Galibert F."/>
            <person name="Aves S.J."/>
            <person name="Xiang Z."/>
            <person name="Hunt C."/>
            <person name="Moore K."/>
            <person name="Hurst S.M."/>
            <person name="Lucas M."/>
            <person name="Rochet M."/>
            <person name="Gaillardin C."/>
            <person name="Tallada V.A."/>
            <person name="Garzon A."/>
            <person name="Thode G."/>
            <person name="Daga R.R."/>
            <person name="Cruzado L."/>
            <person name="Jimenez J."/>
            <person name="Sanchez M."/>
            <person name="del Rey F."/>
            <person name="Benito J."/>
            <person name="Dominguez A."/>
            <person name="Revuelta J.L."/>
            <person name="Moreno S."/>
            <person name="Armstrong J."/>
            <person name="Forsburg S.L."/>
            <person name="Cerutti L."/>
            <person name="Lowe T."/>
            <person name="McCombie W.R."/>
            <person name="Paulsen I."/>
            <person name="Potashkin J."/>
            <person name="Shpakovski G.V."/>
            <person name="Ussery D."/>
            <person name="Barrell B.G."/>
            <person name="Nurse P."/>
        </authorList>
    </citation>
    <scope>NUCLEOTIDE SEQUENCE [LARGE SCALE GENOMIC DNA]</scope>
    <source>
        <strain>972 / ATCC 24843</strain>
    </source>
</reference>
<reference key="2">
    <citation type="journal article" date="1998" name="EMBO J.">
        <title>A misfolded protein conformation is not a sufficient condition for in vivo glucosylation by the UDP-Glc:glycoprotein glucosyltransferase.</title>
        <authorList>
            <person name="Fernandez F."/>
            <person name="D'Alessio C."/>
            <person name="Fanchiotti S."/>
            <person name="Parodi A.J."/>
        </authorList>
    </citation>
    <scope>CATALYTIC ACTIVITY</scope>
    <scope>DISRUPTION PHENOTYPE</scope>
</reference>
<reference key="3">
    <citation type="journal article" date="1998" name="J. Cell Biol.">
        <title>The UDP-Glc:Glycoprotein glucosyltransferase is essential for Schizosaccharomyces pombe viability under conditions of extreme endoplasmic reticulum stress.</title>
        <authorList>
            <person name="Fanchiotti S."/>
            <person name="Fernandez F."/>
            <person name="D'Alessio C."/>
            <person name="Parodi A.J."/>
        </authorList>
    </citation>
    <scope>CATALYTIC ACTIVITY</scope>
    <scope>DISRUPTION PHENOTYPE</scope>
</reference>
<reference key="4">
    <citation type="journal article" date="2006" name="Nat. Biotechnol.">
        <title>ORFeome cloning and global analysis of protein localization in the fission yeast Schizosaccharomyces pombe.</title>
        <authorList>
            <person name="Matsuyama A."/>
            <person name="Arai R."/>
            <person name="Yashiroda Y."/>
            <person name="Shirai A."/>
            <person name="Kamata A."/>
            <person name="Sekido S."/>
            <person name="Kobayashi Y."/>
            <person name="Hashimoto A."/>
            <person name="Hamamoto M."/>
            <person name="Hiraoka Y."/>
            <person name="Horinouchi S."/>
            <person name="Yoshida M."/>
        </authorList>
    </citation>
    <scope>SUBCELLULAR LOCATION [LARGE SCALE ANALYSIS]</scope>
</reference>
<comment type="function">
    <text evidence="1">Catalytic subunit of glucosidase 2, which cleaves sequentially the 2 innermost alpha-1,3-linked glucose residues from the Glc(2)Man(9)GlcNAc(2) oligosaccharide precursor of immature glycoproteins.</text>
</comment>
<comment type="catalytic activity">
    <reaction evidence="5 6">
        <text>N(4)-(alpha-D-Glc-(1-&gt;3)-alpha-D-Man-(1-&gt;2)-alpha-D-Man-(1-&gt;2)-alpha-D-Man-(1-&gt;3)-[alpha-D-Man-(1-&gt;2)-alpha-D-Man-(1-&gt;3)-[alpha-D-Man-(1-&gt;2)-alpha-D-Man-(1-&gt;6)]-alpha-D-Man-(1-&gt;6)]-beta-D-Man-(1-&gt;4)-beta-D-GlcNAc-(1-&gt;4)-beta-D-GlcNAc)-L-asparaginyl-[protein] + H2O = N(4)-(alpha-D-Man-(1-&gt;2)-alpha-D-Man-(1-&gt;2)-alpha-D-Man-(1-&gt;3)-[alpha-D-Man-(1-&gt;2)-alpha-D-Man-(1-&gt;3)-[alpha-D-Man-(1-&gt;2)-alpha-D-Man-(1-&gt;6)]-alpha-D-Man-(1-&gt;6)]-beta-D-Man-(1-&gt;4)-beta-D-GlcNAc-(1-&gt;4)-beta-D-GlcNAc)-L-asparaginyl-[protein] (N-glucan mannose isomer 9A1,2,3B1,2,3) + beta-D-glucose</text>
        <dbReference type="Rhea" id="RHEA:56000"/>
        <dbReference type="Rhea" id="RHEA-COMP:14356"/>
        <dbReference type="Rhea" id="RHEA-COMP:14357"/>
        <dbReference type="ChEBI" id="CHEBI:15377"/>
        <dbReference type="ChEBI" id="CHEBI:15903"/>
        <dbReference type="ChEBI" id="CHEBI:59080"/>
        <dbReference type="ChEBI" id="CHEBI:139493"/>
        <dbReference type="EC" id="3.2.1.207"/>
    </reaction>
</comment>
<comment type="catalytic activity">
    <reaction evidence="5 6">
        <text>N(4)-(alpha-D-Glc-(1-&gt;3)-alpha-D-Glc-(1-&gt;3)-alpha-D-Man-(1-&gt;2)-alpha-D-Man-(1-&gt;2)-alpha-D-Man-(1-&gt;3)-[alpha-D-Man-(1-&gt;2)-alpha-D-Man-(1-&gt;3)-[alpha-D-Man-(1-&gt;2)-alpha-D-Man-(1-&gt;6)]-alpha-D-Man-(1-&gt;6)]-beta-D-Man-(1-&gt;4)-beta-D-GlcNAc-(1-&gt;4)-beta-D-GlcNAc)-L-asparaginyl-[protein] + H2O = N(4)-(alpha-D-Glc-(1-&gt;3)-alpha-D-Man-(1-&gt;2)-alpha-D-Man-(1-&gt;2)-alpha-D-Man-(1-&gt;3)-[alpha-D-Man-(1-&gt;2)-alpha-D-Man-(1-&gt;3)-[alpha-D-Man-(1-&gt;2)-alpha-D-Man-(1-&gt;6)]-alpha-D-Man-(1-&gt;6)]-beta-D-Man-(1-&gt;4)-beta-D-GlcNAc-(1-&gt;4)-beta-D-GlcNAc)-L-asparaginyl-[protein] + beta-D-glucose</text>
        <dbReference type="Rhea" id="RHEA:55996"/>
        <dbReference type="Rhea" id="RHEA-COMP:14355"/>
        <dbReference type="Rhea" id="RHEA-COMP:14357"/>
        <dbReference type="ChEBI" id="CHEBI:15377"/>
        <dbReference type="ChEBI" id="CHEBI:15903"/>
        <dbReference type="ChEBI" id="CHEBI:59080"/>
        <dbReference type="ChEBI" id="CHEBI:59082"/>
        <dbReference type="EC" id="3.2.1.207"/>
    </reaction>
</comment>
<comment type="pathway">
    <text>Glycan metabolism; N-glycan metabolism.</text>
</comment>
<comment type="subunit">
    <text evidence="1">Heterodimer of a catalytic subunit alpha (gls2) and a subunit beta (gtb1).</text>
</comment>
<comment type="subcellular location">
    <subcellularLocation>
        <location evidence="4">Endoplasmic reticulum</location>
    </subcellularLocation>
</comment>
<comment type="disruption phenotype">
    <text evidence="5 6">Gls2 and alg6 double mutant cells that transfer Man(9)GlcNAc(2) and that are unable to remove the glucose units as they lack gls2, grow at 37 degrees Celsius, but are characterized by swollen cells, displaying pear, lemon and round shapes and have, when grown at 28 degrees Celsius, a phenotype of growth and morphology almost identical to that of wild-type cells, indicating that facilitation of glycoprotein folding mediated by the interaction of calnexin and monoglucosylated oligosaccharides does not necessarily require cycles of reglucosylation and deglucosylation. The gls2 and alg6 double mutant cells grown in the absence of exogenous stress show an induction of the binding protein (BiP)-encoding mRNA. An incubation of intact gls2 and alg6 mutant cells with [(14)C]glucose for 15 minutes in the absence of 1-deoxynojirimycin (DNJ) leads to the production of protein-linked Glc(1)Man(9)GlcNAc(2), Man(9)GlcNAc(2) and Man(8)GlcNAc(2).</text>
</comment>
<comment type="similarity">
    <text evidence="3">Belongs to the glycosyl hydrolase 31 family.</text>
</comment>
<dbReference type="EC" id="3.2.1.207" evidence="5 6"/>
<dbReference type="EMBL" id="CU329670">
    <property type="protein sequence ID" value="CAB65603.1"/>
    <property type="molecule type" value="Genomic_DNA"/>
</dbReference>
<dbReference type="RefSeq" id="NP_593490.1">
    <property type="nucleotide sequence ID" value="NM_001018924.2"/>
</dbReference>
<dbReference type="SMR" id="Q9US55"/>
<dbReference type="BioGRID" id="279705">
    <property type="interactions" value="27"/>
</dbReference>
<dbReference type="FunCoup" id="Q9US55">
    <property type="interactions" value="509"/>
</dbReference>
<dbReference type="STRING" id="284812.Q9US55"/>
<dbReference type="CAZy" id="GH31">
    <property type="family name" value="Glycoside Hydrolase Family 31"/>
</dbReference>
<dbReference type="GlyCosmos" id="Q9US55">
    <property type="glycosylation" value="3 sites, No reported glycans"/>
</dbReference>
<dbReference type="iPTMnet" id="Q9US55"/>
<dbReference type="PaxDb" id="4896-SPAC1002.03c.1"/>
<dbReference type="EnsemblFungi" id="SPAC1002.03c.1">
    <property type="protein sequence ID" value="SPAC1002.03c.1:pep"/>
    <property type="gene ID" value="SPAC1002.03c"/>
</dbReference>
<dbReference type="GeneID" id="2543277"/>
<dbReference type="KEGG" id="spo:2543277"/>
<dbReference type="PomBase" id="SPAC1002.03c">
    <property type="gene designation" value="gls2"/>
</dbReference>
<dbReference type="VEuPathDB" id="FungiDB:SPAC1002.03c"/>
<dbReference type="eggNOG" id="KOG1066">
    <property type="taxonomic scope" value="Eukaryota"/>
</dbReference>
<dbReference type="HOGENOM" id="CLU_000631_7_0_1"/>
<dbReference type="InParanoid" id="Q9US55"/>
<dbReference type="OMA" id="TVHQPLW"/>
<dbReference type="PhylomeDB" id="Q9US55"/>
<dbReference type="BRENDA" id="3.2.1.207">
    <property type="organism ID" value="5613"/>
</dbReference>
<dbReference type="UniPathway" id="UPA00957"/>
<dbReference type="PRO" id="PR:Q9US55"/>
<dbReference type="Proteomes" id="UP000002485">
    <property type="component" value="Chromosome I"/>
</dbReference>
<dbReference type="GO" id="GO:0005783">
    <property type="term" value="C:endoplasmic reticulum"/>
    <property type="evidence" value="ECO:0007005"/>
    <property type="project" value="PomBase"/>
</dbReference>
<dbReference type="GO" id="GO:0017177">
    <property type="term" value="C:glucosidase II complex"/>
    <property type="evidence" value="ECO:0000318"/>
    <property type="project" value="GO_Central"/>
</dbReference>
<dbReference type="GO" id="GO:0090599">
    <property type="term" value="F:alpha-glucosidase activity"/>
    <property type="evidence" value="ECO:0000318"/>
    <property type="project" value="GO_Central"/>
</dbReference>
<dbReference type="GO" id="GO:0030246">
    <property type="term" value="F:carbohydrate binding"/>
    <property type="evidence" value="ECO:0007669"/>
    <property type="project" value="InterPro"/>
</dbReference>
<dbReference type="GO" id="GO:0106407">
    <property type="term" value="F:Glc2Man9GlcNAc2 oligosaccharide glucosidase activity"/>
    <property type="evidence" value="ECO:0000314"/>
    <property type="project" value="PomBase"/>
</dbReference>
<dbReference type="GO" id="GO:0005975">
    <property type="term" value="P:carbohydrate metabolic process"/>
    <property type="evidence" value="ECO:0007669"/>
    <property type="project" value="InterPro"/>
</dbReference>
<dbReference type="GO" id="GO:0006491">
    <property type="term" value="P:N-glycan processing"/>
    <property type="evidence" value="ECO:0000314"/>
    <property type="project" value="PomBase"/>
</dbReference>
<dbReference type="CDD" id="cd06603">
    <property type="entry name" value="GH31_GANC_GANAB_alpha"/>
    <property type="match status" value="1"/>
</dbReference>
<dbReference type="CDD" id="cd14752">
    <property type="entry name" value="GH31_N"/>
    <property type="match status" value="1"/>
</dbReference>
<dbReference type="FunFam" id="2.60.40.1180:FF:000023">
    <property type="entry name" value="neutral alpha-glucosidase AB isoform X2"/>
    <property type="match status" value="1"/>
</dbReference>
<dbReference type="Gene3D" id="3.20.20.80">
    <property type="entry name" value="Glycosidases"/>
    <property type="match status" value="1"/>
</dbReference>
<dbReference type="Gene3D" id="2.60.40.1760">
    <property type="entry name" value="glycosyl hydrolase (family 31)"/>
    <property type="match status" value="1"/>
</dbReference>
<dbReference type="Gene3D" id="2.60.40.1180">
    <property type="entry name" value="Golgi alpha-mannosidase II"/>
    <property type="match status" value="2"/>
</dbReference>
<dbReference type="InterPro" id="IPR033403">
    <property type="entry name" value="DUF5110"/>
</dbReference>
<dbReference type="InterPro" id="IPR011013">
    <property type="entry name" value="Gal_mutarotase_sf_dom"/>
</dbReference>
<dbReference type="InterPro" id="IPR048395">
    <property type="entry name" value="Glyco_hydro_31_C"/>
</dbReference>
<dbReference type="InterPro" id="IPR025887">
    <property type="entry name" value="Glyco_hydro_31_N_dom"/>
</dbReference>
<dbReference type="InterPro" id="IPR000322">
    <property type="entry name" value="Glyco_hydro_31_TIM"/>
</dbReference>
<dbReference type="InterPro" id="IPR013780">
    <property type="entry name" value="Glyco_hydro_b"/>
</dbReference>
<dbReference type="InterPro" id="IPR017853">
    <property type="entry name" value="Glycoside_hydrolase_SF"/>
</dbReference>
<dbReference type="PANTHER" id="PTHR22762">
    <property type="entry name" value="ALPHA-GLUCOSIDASE"/>
    <property type="match status" value="1"/>
</dbReference>
<dbReference type="PANTHER" id="PTHR22762:SF54">
    <property type="entry name" value="BCDNA.GH04962"/>
    <property type="match status" value="1"/>
</dbReference>
<dbReference type="Pfam" id="PF17137">
    <property type="entry name" value="DUF5110"/>
    <property type="match status" value="1"/>
</dbReference>
<dbReference type="Pfam" id="PF13802">
    <property type="entry name" value="Gal_mutarotas_2"/>
    <property type="match status" value="1"/>
</dbReference>
<dbReference type="Pfam" id="PF01055">
    <property type="entry name" value="Glyco_hydro_31_2nd"/>
    <property type="match status" value="1"/>
</dbReference>
<dbReference type="Pfam" id="PF21365">
    <property type="entry name" value="Glyco_hydro_31_3rd"/>
    <property type="match status" value="1"/>
</dbReference>
<dbReference type="SUPFAM" id="SSF51445">
    <property type="entry name" value="(Trans)glycosidases"/>
    <property type="match status" value="1"/>
</dbReference>
<dbReference type="SUPFAM" id="SSF74650">
    <property type="entry name" value="Galactose mutarotase-like"/>
    <property type="match status" value="1"/>
</dbReference>
<dbReference type="SUPFAM" id="SSF51011">
    <property type="entry name" value="Glycosyl hydrolase domain"/>
    <property type="match status" value="1"/>
</dbReference>
<accession>Q9US55</accession>